<dbReference type="EC" id="3.6.5.2" evidence="2"/>
<dbReference type="RefSeq" id="XP_003431485.3">
    <property type="nucleotide sequence ID" value="XM_003431437.5"/>
</dbReference>
<dbReference type="RefSeq" id="XP_038405948.1">
    <property type="nucleotide sequence ID" value="XM_038550020.1"/>
</dbReference>
<dbReference type="RefSeq" id="XP_038535287.1">
    <property type="nucleotide sequence ID" value="XM_038679359.1"/>
</dbReference>
<dbReference type="SMR" id="P55745"/>
<dbReference type="FunCoup" id="P55745">
    <property type="interactions" value="1135"/>
</dbReference>
<dbReference type="STRING" id="9615.ENSCAFP00000048738"/>
<dbReference type="PaxDb" id="9612-ENSCAFP00000000675"/>
<dbReference type="Ensembl" id="ENSCAFT00000100886.1">
    <property type="protein sequence ID" value="ENSCAFP00000070287.1"/>
    <property type="gene ID" value="ENSCAFG00000000458.5"/>
</dbReference>
<dbReference type="Ensembl" id="ENSCAFT00030009177.1">
    <property type="protein sequence ID" value="ENSCAFP00030008046.1"/>
    <property type="gene ID" value="ENSCAFG00030004923.1"/>
</dbReference>
<dbReference type="Ensembl" id="ENSCAFT00040022225.1">
    <property type="protein sequence ID" value="ENSCAFP00040019274.1"/>
    <property type="gene ID" value="ENSCAFG00040011919.1"/>
</dbReference>
<dbReference type="Ensembl" id="ENSCAFT00845041845.1">
    <property type="protein sequence ID" value="ENSCAFP00845032823.1"/>
    <property type="gene ID" value="ENSCAFG00845023570.1"/>
</dbReference>
<dbReference type="GeneID" id="100683312"/>
<dbReference type="VEuPathDB" id="HostDB:ENSCAFG00845023570"/>
<dbReference type="VGNC" id="VGNC:45261">
    <property type="gene designation" value="RAB21"/>
</dbReference>
<dbReference type="eggNOG" id="KOG0088">
    <property type="taxonomic scope" value="Eukaryota"/>
</dbReference>
<dbReference type="GeneTree" id="ENSGT00390000017998"/>
<dbReference type="InParanoid" id="P55745"/>
<dbReference type="OrthoDB" id="10019757at2759"/>
<dbReference type="Proteomes" id="UP000002254">
    <property type="component" value="Chromosome 10"/>
</dbReference>
<dbReference type="Proteomes" id="UP000694429">
    <property type="component" value="Chromosome 10"/>
</dbReference>
<dbReference type="Proteomes" id="UP000694542">
    <property type="component" value="Chromosome 10"/>
</dbReference>
<dbReference type="Proteomes" id="UP000805418">
    <property type="component" value="Chromosome 10"/>
</dbReference>
<dbReference type="GO" id="GO:0032154">
    <property type="term" value="C:cleavage furrow"/>
    <property type="evidence" value="ECO:0007669"/>
    <property type="project" value="UniProtKB-SubCell"/>
</dbReference>
<dbReference type="GO" id="GO:0031901">
    <property type="term" value="C:early endosome membrane"/>
    <property type="evidence" value="ECO:0007669"/>
    <property type="project" value="UniProtKB-SubCell"/>
</dbReference>
<dbReference type="GO" id="GO:0005789">
    <property type="term" value="C:endoplasmic reticulum membrane"/>
    <property type="evidence" value="ECO:0007669"/>
    <property type="project" value="UniProtKB-SubCell"/>
</dbReference>
<dbReference type="GO" id="GO:0000139">
    <property type="term" value="C:Golgi membrane"/>
    <property type="evidence" value="ECO:0007669"/>
    <property type="project" value="UniProtKB-SubCell"/>
</dbReference>
<dbReference type="GO" id="GO:0043005">
    <property type="term" value="C:neuron projection"/>
    <property type="evidence" value="ECO:0007669"/>
    <property type="project" value="UniProtKB-SubCell"/>
</dbReference>
<dbReference type="GO" id="GO:0019003">
    <property type="term" value="F:GDP binding"/>
    <property type="evidence" value="ECO:0000250"/>
    <property type="project" value="UniProtKB"/>
</dbReference>
<dbReference type="GO" id="GO:0005525">
    <property type="term" value="F:GTP binding"/>
    <property type="evidence" value="ECO:0000250"/>
    <property type="project" value="UniProtKB"/>
</dbReference>
<dbReference type="GO" id="GO:0003924">
    <property type="term" value="F:GTPase activity"/>
    <property type="evidence" value="ECO:0000250"/>
    <property type="project" value="UniProtKB"/>
</dbReference>
<dbReference type="GO" id="GO:0050821">
    <property type="term" value="P:protein stabilization"/>
    <property type="evidence" value="ECO:0000250"/>
    <property type="project" value="UniProtKB"/>
</dbReference>
<dbReference type="GO" id="GO:0015031">
    <property type="term" value="P:protein transport"/>
    <property type="evidence" value="ECO:0007669"/>
    <property type="project" value="UniProtKB-KW"/>
</dbReference>
<dbReference type="GO" id="GO:0032482">
    <property type="term" value="P:Rab protein signal transduction"/>
    <property type="evidence" value="ECO:0007669"/>
    <property type="project" value="InterPro"/>
</dbReference>
<dbReference type="CDD" id="cd04123">
    <property type="entry name" value="Rab21"/>
    <property type="match status" value="1"/>
</dbReference>
<dbReference type="FunFam" id="3.40.50.300:FF:000550">
    <property type="entry name" value="ras-related protein Rab-21"/>
    <property type="match status" value="1"/>
</dbReference>
<dbReference type="Gene3D" id="3.40.50.300">
    <property type="entry name" value="P-loop containing nucleotide triphosphate hydrolases"/>
    <property type="match status" value="1"/>
</dbReference>
<dbReference type="InterPro" id="IPR027417">
    <property type="entry name" value="P-loop_NTPase"/>
</dbReference>
<dbReference type="InterPro" id="IPR041833">
    <property type="entry name" value="Rab21"/>
</dbReference>
<dbReference type="InterPro" id="IPR005225">
    <property type="entry name" value="Small_GTP-bd"/>
</dbReference>
<dbReference type="InterPro" id="IPR001806">
    <property type="entry name" value="Small_GTPase"/>
</dbReference>
<dbReference type="NCBIfam" id="TIGR00231">
    <property type="entry name" value="small_GTP"/>
    <property type="match status" value="1"/>
</dbReference>
<dbReference type="PANTHER" id="PTHR47978">
    <property type="match status" value="1"/>
</dbReference>
<dbReference type="Pfam" id="PF00071">
    <property type="entry name" value="Ras"/>
    <property type="match status" value="1"/>
</dbReference>
<dbReference type="PRINTS" id="PR00449">
    <property type="entry name" value="RASTRNSFRMNG"/>
</dbReference>
<dbReference type="SMART" id="SM00175">
    <property type="entry name" value="RAB"/>
    <property type="match status" value="1"/>
</dbReference>
<dbReference type="SMART" id="SM00176">
    <property type="entry name" value="RAN"/>
    <property type="match status" value="1"/>
</dbReference>
<dbReference type="SMART" id="SM00173">
    <property type="entry name" value="RAS"/>
    <property type="match status" value="1"/>
</dbReference>
<dbReference type="SMART" id="SM00174">
    <property type="entry name" value="RHO"/>
    <property type="match status" value="1"/>
</dbReference>
<dbReference type="SUPFAM" id="SSF52540">
    <property type="entry name" value="P-loop containing nucleoside triphosphate hydrolases"/>
    <property type="match status" value="1"/>
</dbReference>
<dbReference type="PROSITE" id="PS51419">
    <property type="entry name" value="RAB"/>
    <property type="match status" value="1"/>
</dbReference>
<protein>
    <recommendedName>
        <fullName>Ras-related protein Rab-21</fullName>
        <ecNumber evidence="2">3.6.5.2</ecNumber>
    </recommendedName>
</protein>
<organism>
    <name type="scientific">Canis lupus familiaris</name>
    <name type="common">Dog</name>
    <name type="synonym">Canis familiaris</name>
    <dbReference type="NCBI Taxonomy" id="9615"/>
    <lineage>
        <taxon>Eukaryota</taxon>
        <taxon>Metazoa</taxon>
        <taxon>Chordata</taxon>
        <taxon>Craniata</taxon>
        <taxon>Vertebrata</taxon>
        <taxon>Euteleostomi</taxon>
        <taxon>Mammalia</taxon>
        <taxon>Eutheria</taxon>
        <taxon>Laurasiatheria</taxon>
        <taxon>Carnivora</taxon>
        <taxon>Caniformia</taxon>
        <taxon>Canidae</taxon>
        <taxon>Canis</taxon>
    </lineage>
</organism>
<gene>
    <name type="primary">RAB21</name>
</gene>
<reference key="1">
    <citation type="book" date="1995" name="Guidebook to the small GTPases">
        <title>Rab21.</title>
        <editorList>
            <person name="Zerial M."/>
            <person name="Huber L.A."/>
        </editorList>
        <authorList>
            <person name="Chavrier P."/>
        </authorList>
    </citation>
    <scope>NUCLEOTIDE SEQUENCE</scope>
</reference>
<feature type="initiator methionine" description="Removed" evidence="6">
    <location>
        <position position="1"/>
    </location>
</feature>
<feature type="chain" id="PRO_0000121204" description="Ras-related protein Rab-21">
    <location>
        <begin position="2"/>
        <end position="220"/>
    </location>
</feature>
<feature type="propeptide" id="PRO_0000370767" description="Removed in mature form" evidence="7">
    <location>
        <begin position="221"/>
        <end position="223"/>
    </location>
</feature>
<feature type="short sequence motif" description="Switch 1" evidence="6">
    <location>
        <begin position="41"/>
        <end position="54"/>
    </location>
</feature>
<feature type="short sequence motif" description="Switch 2" evidence="6">
    <location>
        <begin position="74"/>
        <end position="92"/>
    </location>
</feature>
<feature type="binding site" evidence="6">
    <location>
        <position position="26"/>
    </location>
    <ligand>
        <name>GTP</name>
        <dbReference type="ChEBI" id="CHEBI:37565"/>
    </ligand>
</feature>
<feature type="binding site" evidence="6">
    <location>
        <position position="29"/>
    </location>
    <ligand>
        <name>GTP</name>
        <dbReference type="ChEBI" id="CHEBI:37565"/>
    </ligand>
</feature>
<feature type="binding site" evidence="6">
    <location>
        <position position="30"/>
    </location>
    <ligand>
        <name>GTP</name>
        <dbReference type="ChEBI" id="CHEBI:37565"/>
    </ligand>
</feature>
<feature type="binding site" evidence="6">
    <location>
        <position position="31"/>
    </location>
    <ligand>
        <name>GTP</name>
        <dbReference type="ChEBI" id="CHEBI:37565"/>
    </ligand>
</feature>
<feature type="binding site" evidence="6">
    <location>
        <position position="31"/>
    </location>
    <ligand>
        <name>Mg(2+)</name>
        <dbReference type="ChEBI" id="CHEBI:18420"/>
    </ligand>
</feature>
<feature type="binding site" evidence="6">
    <location>
        <position position="32"/>
    </location>
    <ligand>
        <name>GTP</name>
        <dbReference type="ChEBI" id="CHEBI:37565"/>
    </ligand>
</feature>
<feature type="binding site" evidence="6">
    <location>
        <position position="43"/>
    </location>
    <ligand>
        <name>GTP</name>
        <dbReference type="ChEBI" id="CHEBI:37565"/>
    </ligand>
</feature>
<feature type="binding site" evidence="6">
    <location>
        <position position="44"/>
    </location>
    <ligand>
        <name>GTP</name>
        <dbReference type="ChEBI" id="CHEBI:37565"/>
    </ligand>
</feature>
<feature type="binding site" evidence="6">
    <location>
        <position position="46"/>
    </location>
    <ligand>
        <name>GTP</name>
        <dbReference type="ChEBI" id="CHEBI:37565"/>
    </ligand>
</feature>
<feature type="binding site" evidence="6">
    <location>
        <position position="48"/>
    </location>
    <ligand>
        <name>GTP</name>
        <dbReference type="ChEBI" id="CHEBI:37565"/>
    </ligand>
</feature>
<feature type="binding site" evidence="6">
    <location>
        <position position="49"/>
    </location>
    <ligand>
        <name>GTP</name>
        <dbReference type="ChEBI" id="CHEBI:37565"/>
    </ligand>
</feature>
<feature type="binding site" evidence="6">
    <location>
        <position position="49"/>
    </location>
    <ligand>
        <name>Mg(2+)</name>
        <dbReference type="ChEBI" id="CHEBI:18420"/>
    </ligand>
</feature>
<feature type="binding site" evidence="6">
    <location>
        <position position="72"/>
    </location>
    <ligand>
        <name>Mg(2+)</name>
        <dbReference type="ChEBI" id="CHEBI:18420"/>
    </ligand>
</feature>
<feature type="binding site" evidence="6">
    <location>
        <position position="75"/>
    </location>
    <ligand>
        <name>GTP</name>
        <dbReference type="ChEBI" id="CHEBI:37565"/>
    </ligand>
</feature>
<feature type="binding site" evidence="6">
    <location>
        <position position="130"/>
    </location>
    <ligand>
        <name>GTP</name>
        <dbReference type="ChEBI" id="CHEBI:37565"/>
    </ligand>
</feature>
<feature type="binding site" evidence="6">
    <location>
        <position position="131"/>
    </location>
    <ligand>
        <name>GTP</name>
        <dbReference type="ChEBI" id="CHEBI:37565"/>
    </ligand>
</feature>
<feature type="binding site" evidence="6">
    <location>
        <position position="133"/>
    </location>
    <ligand>
        <name>GTP</name>
        <dbReference type="ChEBI" id="CHEBI:37565"/>
    </ligand>
</feature>
<feature type="binding site" evidence="6">
    <location>
        <position position="161"/>
    </location>
    <ligand>
        <name>GTP</name>
        <dbReference type="ChEBI" id="CHEBI:37565"/>
    </ligand>
</feature>
<feature type="binding site" evidence="6">
    <location>
        <position position="162"/>
    </location>
    <ligand>
        <name>GTP</name>
        <dbReference type="ChEBI" id="CHEBI:37565"/>
    </ligand>
</feature>
<feature type="modified residue" description="N-acetylalanine" evidence="6">
    <location>
        <position position="2"/>
    </location>
</feature>
<feature type="modified residue" description="Cysteine methyl ester" evidence="7">
    <location>
        <position position="220"/>
    </location>
</feature>
<feature type="lipid moiety-binding region" description="S-geranylgeranyl cysteine" evidence="1">
    <location>
        <position position="219"/>
    </location>
</feature>
<feature type="lipid moiety-binding region" description="S-geranylgeranyl cysteine" evidence="1">
    <location>
        <position position="220"/>
    </location>
</feature>
<name>RAB21_CANLF</name>
<keyword id="KW-0007">Acetylation</keyword>
<keyword id="KW-0966">Cell projection</keyword>
<keyword id="KW-0968">Cytoplasmic vesicle</keyword>
<keyword id="KW-0256">Endoplasmic reticulum</keyword>
<keyword id="KW-0967">Endosome</keyword>
<keyword id="KW-0333">Golgi apparatus</keyword>
<keyword id="KW-0342">GTP-binding</keyword>
<keyword id="KW-0378">Hydrolase</keyword>
<keyword id="KW-0449">Lipoprotein</keyword>
<keyword id="KW-0460">Magnesium</keyword>
<keyword id="KW-0472">Membrane</keyword>
<keyword id="KW-0479">Metal-binding</keyword>
<keyword id="KW-0488">Methylation</keyword>
<keyword id="KW-0547">Nucleotide-binding</keyword>
<keyword id="KW-0636">Prenylation</keyword>
<keyword id="KW-0653">Protein transport</keyword>
<keyword id="KW-1185">Reference proteome</keyword>
<keyword id="KW-0813">Transport</keyword>
<comment type="function">
    <text evidence="1 4 6">The small GTPases Rab are key regulators of intracellular membrane trafficking, from the formation of transport vesicles to their fusion with membranes. Rabs cycle between an inactive GDP-bound form and an active GTP-bound form that is able to recruit to membranes different sets of downstream effectors directly responsible for vesicle formation, movement, tethering and fusion (By similarity). RAB21 is involved in membrane trafficking control (By similarity). Regulates integrin internalization and recycling, but does not influence the traffic of endosomally translocated receptors in general. As a result, may regulate cell adhesion and migration. During the mitosis of adherent cells, controls the endosomal trafficking of integrins which is required for the successful completion of cytokinesis (By similarity). Involved in neurite growth (By similarity). Modulates protein levels of the cargo receptors TMED2 and TMED10, and required for appropriate Golgi localization of TMED10 (By similarity).</text>
</comment>
<comment type="catalytic activity">
    <reaction evidence="2">
        <text>GTP + H2O = GDP + phosphate + H(+)</text>
        <dbReference type="Rhea" id="RHEA:19669"/>
        <dbReference type="ChEBI" id="CHEBI:15377"/>
        <dbReference type="ChEBI" id="CHEBI:15378"/>
        <dbReference type="ChEBI" id="CHEBI:37565"/>
        <dbReference type="ChEBI" id="CHEBI:43474"/>
        <dbReference type="ChEBI" id="CHEBI:58189"/>
        <dbReference type="EC" id="3.6.5.2"/>
    </reaction>
    <physiologicalReaction direction="left-to-right" evidence="2">
        <dbReference type="Rhea" id="RHEA:19670"/>
    </physiologicalReaction>
</comment>
<comment type="cofactor">
    <cofactor evidence="6">
        <name>Mg(2+)</name>
        <dbReference type="ChEBI" id="CHEBI:18420"/>
    </cofactor>
</comment>
<comment type="activity regulation">
    <text evidence="6 8">Regulated by guanine nucleotide exchange factors (GEFs) including ANKRD27 and RABGEF1, which promote the exchange of bound GDP for free GTP (By similarity). Regulated by GTPase activating proteins (GAPs) which increase the GTP hydrolysis activity. Inhibited by GDP dissociation inhibitors (GDIs) (Probable).</text>
</comment>
<comment type="subunit">
    <text evidence="1 5 6">Interacts with the cytoplasmic tail of integrins ITGA1, ITGA2, ITGA5, ITGA6, ITGA11 and ITGB1; this interaction is dependent upon its GDP/GTP cycle. Interacts with ANKRD27 (By similarity). Interacts (active GTP-bound form) with TMED10; the interaction is indirect and regulates TMED10 abundance and localization at the Golgi (By similarity).</text>
</comment>
<comment type="subcellular location">
    <subcellularLocation>
        <location evidence="6">Endoplasmic reticulum membrane</location>
        <topology evidence="8">Lipid-anchor</topology>
    </subcellularLocation>
    <subcellularLocation>
        <location evidence="6">Golgi apparatus</location>
        <location evidence="6">trans-Golgi network</location>
    </subcellularLocation>
    <subcellularLocation>
        <location evidence="6">Golgi apparatus membrane</location>
    </subcellularLocation>
    <subcellularLocation>
        <location evidence="6">Early endosome membrane</location>
    </subcellularLocation>
    <subcellularLocation>
        <location evidence="6">Cytoplasmic vesicle membrane</location>
    </subcellularLocation>
    <subcellularLocation>
        <location evidence="6">Cleavage furrow</location>
    </subcellularLocation>
    <subcellularLocation>
        <location evidence="3">Cell projection</location>
        <location evidence="3">Neuron projection</location>
    </subcellularLocation>
    <text evidence="3 6">Colocalizes with ANKRD27 and VAMP7 in neurites (By similarity). In nonpolarized epithelial Caco-2 cells, found in the endoplasmic reticulum; in polarized cells, observed in vesicles in the apical cytoplasm. During mitosis, in mid-telophase, localized in the ingressing cleavage furrow. In late telophase, detected at the opposite poles of the daughter cells, in vesicles at the base of lamellipodia formed by the separating daughter cells (By similarity).</text>
</comment>
<comment type="domain">
    <text evidence="2">Switch 1, switch 2 and the interswitch regions are characteristic of Rab GTPases and mediate the interactions with Rab downstream effectors. The switch regions undergo conformational changes upon nucleotide binding which drive interaction with specific sets of effector proteins, with most effectors only binding to GTP-bound Rab.</text>
</comment>
<comment type="similarity">
    <text evidence="8">Belongs to the small GTPase superfamily. Rab family.</text>
</comment>
<evidence type="ECO:0000250" key="1"/>
<evidence type="ECO:0000250" key="2">
    <source>
        <dbReference type="UniProtKB" id="P20339"/>
    </source>
</evidence>
<evidence type="ECO:0000250" key="3">
    <source>
        <dbReference type="UniProtKB" id="P35282"/>
    </source>
</evidence>
<evidence type="ECO:0000250" key="4">
    <source>
        <dbReference type="UniProtKB" id="Q6AXT5"/>
    </source>
</evidence>
<evidence type="ECO:0000250" key="5">
    <source>
        <dbReference type="UniProtKB" id="Q96NW4"/>
    </source>
</evidence>
<evidence type="ECO:0000250" key="6">
    <source>
        <dbReference type="UniProtKB" id="Q9UL25"/>
    </source>
</evidence>
<evidence type="ECO:0000255" key="7"/>
<evidence type="ECO:0000305" key="8"/>
<accession>P55745</accession>
<sequence length="223" mass="24161">MAAAGGGGGGAAGRAYSFKVVLLGEGCVGKTSLVLRYCENKFNDKHITTLQASFLTKKLNIGGKRVNLAIWDTAGQERFHALGPIYYRDSNGAILVYDITDEDSFQKVKNWVKELRKMLGNEICLCIVGNKIDLEKERHVSIQEAESYAESVGAKHYHTSAKQNKGIEELFLDLCKRMIETAQVDERAKGNGSSQPGAARRGVQIIDDEPQAQSSGGGCCSSG</sequence>
<proteinExistence type="inferred from homology"/>